<accession>A8FLP9</accession>
<keyword id="KW-0119">Carbohydrate metabolism</keyword>
<keyword id="KW-0963">Cytoplasm</keyword>
<keyword id="KW-0378">Hydrolase</keyword>
<keyword id="KW-0460">Magnesium</keyword>
<keyword id="KW-0479">Metal-binding</keyword>
<proteinExistence type="inferred from homology"/>
<feature type="chain" id="PRO_0000364516" description="Fructose-1,6-bisphosphatase class 1">
    <location>
        <begin position="1"/>
        <end position="280"/>
    </location>
</feature>
<feature type="binding site" evidence="1">
    <location>
        <position position="64"/>
    </location>
    <ligand>
        <name>Mg(2+)</name>
        <dbReference type="ChEBI" id="CHEBI:18420"/>
        <label>1</label>
    </ligand>
</feature>
<feature type="binding site" evidence="1">
    <location>
        <position position="83"/>
    </location>
    <ligand>
        <name>Mg(2+)</name>
        <dbReference type="ChEBI" id="CHEBI:18420"/>
        <label>1</label>
    </ligand>
</feature>
<feature type="binding site" evidence="1">
    <location>
        <position position="83"/>
    </location>
    <ligand>
        <name>Mg(2+)</name>
        <dbReference type="ChEBI" id="CHEBI:18420"/>
        <label>2</label>
    </ligand>
</feature>
<feature type="binding site" evidence="1">
    <location>
        <position position="85"/>
    </location>
    <ligand>
        <name>Mg(2+)</name>
        <dbReference type="ChEBI" id="CHEBI:18420"/>
        <label>1</label>
    </ligand>
</feature>
<feature type="binding site" evidence="1">
    <location>
        <begin position="86"/>
        <end position="89"/>
    </location>
    <ligand>
        <name>substrate</name>
    </ligand>
</feature>
<feature type="binding site" evidence="1">
    <location>
        <position position="86"/>
    </location>
    <ligand>
        <name>Mg(2+)</name>
        <dbReference type="ChEBI" id="CHEBI:18420"/>
        <label>2</label>
    </ligand>
</feature>
<feature type="binding site" evidence="1">
    <location>
        <position position="189"/>
    </location>
    <ligand>
        <name>substrate</name>
    </ligand>
</feature>
<feature type="binding site" evidence="1">
    <location>
        <position position="220"/>
    </location>
    <ligand>
        <name>substrate</name>
    </ligand>
</feature>
<feature type="binding site" evidence="1">
    <location>
        <position position="226"/>
    </location>
    <ligand>
        <name>Mg(2+)</name>
        <dbReference type="ChEBI" id="CHEBI:18420"/>
        <label>2</label>
    </ligand>
</feature>
<comment type="catalytic activity">
    <reaction evidence="1">
        <text>beta-D-fructose 1,6-bisphosphate + H2O = beta-D-fructose 6-phosphate + phosphate</text>
        <dbReference type="Rhea" id="RHEA:11064"/>
        <dbReference type="ChEBI" id="CHEBI:15377"/>
        <dbReference type="ChEBI" id="CHEBI:32966"/>
        <dbReference type="ChEBI" id="CHEBI:43474"/>
        <dbReference type="ChEBI" id="CHEBI:57634"/>
        <dbReference type="EC" id="3.1.3.11"/>
    </reaction>
</comment>
<comment type="cofactor">
    <cofactor evidence="1">
        <name>Mg(2+)</name>
        <dbReference type="ChEBI" id="CHEBI:18420"/>
    </cofactor>
    <text evidence="1">Binds 2 magnesium ions per subunit.</text>
</comment>
<comment type="pathway">
    <text evidence="1">Carbohydrate biosynthesis; gluconeogenesis.</text>
</comment>
<comment type="subunit">
    <text evidence="1">Homotetramer.</text>
</comment>
<comment type="subcellular location">
    <subcellularLocation>
        <location evidence="1">Cytoplasm</location>
    </subcellularLocation>
</comment>
<comment type="similarity">
    <text evidence="1">Belongs to the FBPase class 1 family.</text>
</comment>
<gene>
    <name evidence="1" type="primary">fbp</name>
    <name type="ordered locus">C8J_0787</name>
</gene>
<name>F16PA_CAMJ8</name>
<protein>
    <recommendedName>
        <fullName evidence="1">Fructose-1,6-bisphosphatase class 1</fullName>
        <shortName evidence="1">FBPase class 1</shortName>
        <ecNumber evidence="1">3.1.3.11</ecNumber>
    </recommendedName>
    <alternativeName>
        <fullName evidence="1">D-fructose-1,6-bisphosphate 1-phosphohydrolase class 1</fullName>
    </alternativeName>
</protein>
<dbReference type="EC" id="3.1.3.11" evidence="1"/>
<dbReference type="EMBL" id="CP000814">
    <property type="protein sequence ID" value="ABV52386.1"/>
    <property type="molecule type" value="Genomic_DNA"/>
</dbReference>
<dbReference type="RefSeq" id="WP_002866948.1">
    <property type="nucleotide sequence ID" value="NC_009839.1"/>
</dbReference>
<dbReference type="SMR" id="A8FLP9"/>
<dbReference type="KEGG" id="cju:C8J_0787"/>
<dbReference type="HOGENOM" id="CLU_039977_0_0_7"/>
<dbReference type="UniPathway" id="UPA00138"/>
<dbReference type="GO" id="GO:0005829">
    <property type="term" value="C:cytosol"/>
    <property type="evidence" value="ECO:0007669"/>
    <property type="project" value="TreeGrafter"/>
</dbReference>
<dbReference type="GO" id="GO:0042132">
    <property type="term" value="F:fructose 1,6-bisphosphate 1-phosphatase activity"/>
    <property type="evidence" value="ECO:0007669"/>
    <property type="project" value="UniProtKB-UniRule"/>
</dbReference>
<dbReference type="GO" id="GO:0000287">
    <property type="term" value="F:magnesium ion binding"/>
    <property type="evidence" value="ECO:0007669"/>
    <property type="project" value="UniProtKB-UniRule"/>
</dbReference>
<dbReference type="GO" id="GO:0030388">
    <property type="term" value="P:fructose 1,6-bisphosphate metabolic process"/>
    <property type="evidence" value="ECO:0007669"/>
    <property type="project" value="TreeGrafter"/>
</dbReference>
<dbReference type="GO" id="GO:0006002">
    <property type="term" value="P:fructose 6-phosphate metabolic process"/>
    <property type="evidence" value="ECO:0007669"/>
    <property type="project" value="TreeGrafter"/>
</dbReference>
<dbReference type="GO" id="GO:0006000">
    <property type="term" value="P:fructose metabolic process"/>
    <property type="evidence" value="ECO:0007669"/>
    <property type="project" value="TreeGrafter"/>
</dbReference>
<dbReference type="GO" id="GO:0006094">
    <property type="term" value="P:gluconeogenesis"/>
    <property type="evidence" value="ECO:0007669"/>
    <property type="project" value="UniProtKB-UniRule"/>
</dbReference>
<dbReference type="GO" id="GO:0005986">
    <property type="term" value="P:sucrose biosynthetic process"/>
    <property type="evidence" value="ECO:0007669"/>
    <property type="project" value="TreeGrafter"/>
</dbReference>
<dbReference type="Gene3D" id="3.40.190.80">
    <property type="match status" value="1"/>
</dbReference>
<dbReference type="Gene3D" id="3.30.540.10">
    <property type="entry name" value="Fructose-1,6-Bisphosphatase, subunit A, domain 1"/>
    <property type="match status" value="1"/>
</dbReference>
<dbReference type="HAMAP" id="MF_01855">
    <property type="entry name" value="FBPase_class1"/>
    <property type="match status" value="1"/>
</dbReference>
<dbReference type="InterPro" id="IPR044015">
    <property type="entry name" value="FBPase_C_dom"/>
</dbReference>
<dbReference type="InterPro" id="IPR000146">
    <property type="entry name" value="FBPase_class-1"/>
</dbReference>
<dbReference type="InterPro" id="IPR033391">
    <property type="entry name" value="FBPase_N"/>
</dbReference>
<dbReference type="InterPro" id="IPR028343">
    <property type="entry name" value="FBPtase"/>
</dbReference>
<dbReference type="InterPro" id="IPR023079">
    <property type="entry name" value="SBPase"/>
</dbReference>
<dbReference type="NCBIfam" id="NF006782">
    <property type="entry name" value="PRK09293.2-3"/>
    <property type="match status" value="1"/>
</dbReference>
<dbReference type="PANTHER" id="PTHR11556">
    <property type="entry name" value="FRUCTOSE-1,6-BISPHOSPHATASE-RELATED"/>
    <property type="match status" value="1"/>
</dbReference>
<dbReference type="PANTHER" id="PTHR11556:SF35">
    <property type="entry name" value="SEDOHEPTULOSE-1,7-BISPHOSPHATASE, CHLOROPLASTIC"/>
    <property type="match status" value="1"/>
</dbReference>
<dbReference type="Pfam" id="PF00316">
    <property type="entry name" value="FBPase"/>
    <property type="match status" value="1"/>
</dbReference>
<dbReference type="Pfam" id="PF18913">
    <property type="entry name" value="FBPase_C"/>
    <property type="match status" value="1"/>
</dbReference>
<dbReference type="PIRSF" id="PIRSF500210">
    <property type="entry name" value="FBPtase"/>
    <property type="match status" value="1"/>
</dbReference>
<dbReference type="PIRSF" id="PIRSF000904">
    <property type="entry name" value="FBPtase_SBPase"/>
    <property type="match status" value="1"/>
</dbReference>
<dbReference type="PRINTS" id="PR01958">
    <property type="entry name" value="S17BPHPHTASE"/>
</dbReference>
<dbReference type="SUPFAM" id="SSF56655">
    <property type="entry name" value="Carbohydrate phosphatase"/>
    <property type="match status" value="1"/>
</dbReference>
<sequence>MQEVISYIQKAVLEISNALKFPDTSYSQNQNFTGDTQLKFDVLSDGIITKTLSQCSSIKAIISEEKDEILTLNERANFIVAYDPLDGSSLMDVNFAIGSIFAIYEEKASAKNLRAALYSMYGARLELVICKDQPKLYRLNANNEFIFIKDLKMNEKGKINATGGTQKFWEEKHAKFIKSLFDEGYRLRYSGAMVSDINQILLKGGGIFSYPATQDAPNGKLRAFFEVFPLAFIIEKAGGKTTNGKNHSLLELEFDKIHATTPCFFGSEYEISKLLKAYNE</sequence>
<organism>
    <name type="scientific">Campylobacter jejuni subsp. jejuni serotype O:6 (strain 81116 / NCTC 11828)</name>
    <dbReference type="NCBI Taxonomy" id="407148"/>
    <lineage>
        <taxon>Bacteria</taxon>
        <taxon>Pseudomonadati</taxon>
        <taxon>Campylobacterota</taxon>
        <taxon>Epsilonproteobacteria</taxon>
        <taxon>Campylobacterales</taxon>
        <taxon>Campylobacteraceae</taxon>
        <taxon>Campylobacter</taxon>
    </lineage>
</organism>
<reference key="1">
    <citation type="journal article" date="2007" name="J. Bacteriol.">
        <title>The complete genome sequence of Campylobacter jejuni strain 81116 (NCTC11828).</title>
        <authorList>
            <person name="Pearson B.M."/>
            <person name="Gaskin D.J.H."/>
            <person name="Segers R.P.A.M."/>
            <person name="Wells J.M."/>
            <person name="Nuijten P.J.M."/>
            <person name="van Vliet A.H.M."/>
        </authorList>
    </citation>
    <scope>NUCLEOTIDE SEQUENCE [LARGE SCALE GENOMIC DNA]</scope>
    <source>
        <strain>81116 / NCTC 11828</strain>
    </source>
</reference>
<evidence type="ECO:0000255" key="1">
    <source>
        <dbReference type="HAMAP-Rule" id="MF_01855"/>
    </source>
</evidence>